<reference key="1">
    <citation type="journal article" date="2009" name="PLoS Genet.">
        <title>Organised genome dynamics in the Escherichia coli species results in highly diverse adaptive paths.</title>
        <authorList>
            <person name="Touchon M."/>
            <person name="Hoede C."/>
            <person name="Tenaillon O."/>
            <person name="Barbe V."/>
            <person name="Baeriswyl S."/>
            <person name="Bidet P."/>
            <person name="Bingen E."/>
            <person name="Bonacorsi S."/>
            <person name="Bouchier C."/>
            <person name="Bouvet O."/>
            <person name="Calteau A."/>
            <person name="Chiapello H."/>
            <person name="Clermont O."/>
            <person name="Cruveiller S."/>
            <person name="Danchin A."/>
            <person name="Diard M."/>
            <person name="Dossat C."/>
            <person name="Karoui M.E."/>
            <person name="Frapy E."/>
            <person name="Garry L."/>
            <person name="Ghigo J.M."/>
            <person name="Gilles A.M."/>
            <person name="Johnson J."/>
            <person name="Le Bouguenec C."/>
            <person name="Lescat M."/>
            <person name="Mangenot S."/>
            <person name="Martinez-Jehanne V."/>
            <person name="Matic I."/>
            <person name="Nassif X."/>
            <person name="Oztas S."/>
            <person name="Petit M.A."/>
            <person name="Pichon C."/>
            <person name="Rouy Z."/>
            <person name="Ruf C.S."/>
            <person name="Schneider D."/>
            <person name="Tourret J."/>
            <person name="Vacherie B."/>
            <person name="Vallenet D."/>
            <person name="Medigue C."/>
            <person name="Rocha E.P.C."/>
            <person name="Denamur E."/>
        </authorList>
    </citation>
    <scope>NUCLEOTIDE SEQUENCE [LARGE SCALE GENOMIC DNA]</scope>
    <source>
        <strain>ED1a</strain>
    </source>
</reference>
<organism>
    <name type="scientific">Escherichia coli O81 (strain ED1a)</name>
    <dbReference type="NCBI Taxonomy" id="585397"/>
    <lineage>
        <taxon>Bacteria</taxon>
        <taxon>Pseudomonadati</taxon>
        <taxon>Pseudomonadota</taxon>
        <taxon>Gammaproteobacteria</taxon>
        <taxon>Enterobacterales</taxon>
        <taxon>Enterobacteriaceae</taxon>
        <taxon>Escherichia</taxon>
    </lineage>
</organism>
<comment type="function">
    <text evidence="1">ATPase subunit of a proteasome-like degradation complex; this subunit has chaperone activity. The binding of ATP and its subsequent hydrolysis by HslU are essential for unfolding of protein substrates subsequently hydrolyzed by HslV. HslU recognizes the N-terminal part of its protein substrates and unfolds these before they are guided to HslV for hydrolysis.</text>
</comment>
<comment type="subunit">
    <text evidence="1">A double ring-shaped homohexamer of HslV is capped on each side by a ring-shaped HslU homohexamer. The assembly of the HslU/HslV complex is dependent on binding of ATP.</text>
</comment>
<comment type="subcellular location">
    <subcellularLocation>
        <location evidence="1">Cytoplasm</location>
    </subcellularLocation>
</comment>
<comment type="induction">
    <text evidence="1">By heat shock.</text>
</comment>
<comment type="similarity">
    <text evidence="1">Belongs to the ClpX chaperone family. HslU subfamily.</text>
</comment>
<name>HSLU_ECO81</name>
<keyword id="KW-0067">ATP-binding</keyword>
<keyword id="KW-0143">Chaperone</keyword>
<keyword id="KW-0963">Cytoplasm</keyword>
<keyword id="KW-0547">Nucleotide-binding</keyword>
<keyword id="KW-0346">Stress response</keyword>
<dbReference type="EMBL" id="CU928162">
    <property type="protein sequence ID" value="CAR10741.2"/>
    <property type="molecule type" value="Genomic_DNA"/>
</dbReference>
<dbReference type="RefSeq" id="WP_001293344.1">
    <property type="nucleotide sequence ID" value="NC_011745.1"/>
</dbReference>
<dbReference type="SMR" id="B7N2S2"/>
<dbReference type="KEGG" id="ecq:ECED1_4633"/>
<dbReference type="HOGENOM" id="CLU_033123_0_0_6"/>
<dbReference type="Proteomes" id="UP000000748">
    <property type="component" value="Chromosome"/>
</dbReference>
<dbReference type="GO" id="GO:0009376">
    <property type="term" value="C:HslUV protease complex"/>
    <property type="evidence" value="ECO:0007669"/>
    <property type="project" value="UniProtKB-UniRule"/>
</dbReference>
<dbReference type="GO" id="GO:0005524">
    <property type="term" value="F:ATP binding"/>
    <property type="evidence" value="ECO:0007669"/>
    <property type="project" value="UniProtKB-UniRule"/>
</dbReference>
<dbReference type="GO" id="GO:0016887">
    <property type="term" value="F:ATP hydrolysis activity"/>
    <property type="evidence" value="ECO:0007669"/>
    <property type="project" value="InterPro"/>
</dbReference>
<dbReference type="GO" id="GO:0008233">
    <property type="term" value="F:peptidase activity"/>
    <property type="evidence" value="ECO:0007669"/>
    <property type="project" value="InterPro"/>
</dbReference>
<dbReference type="GO" id="GO:0036402">
    <property type="term" value="F:proteasome-activating activity"/>
    <property type="evidence" value="ECO:0007669"/>
    <property type="project" value="UniProtKB-UniRule"/>
</dbReference>
<dbReference type="GO" id="GO:0043335">
    <property type="term" value="P:protein unfolding"/>
    <property type="evidence" value="ECO:0007669"/>
    <property type="project" value="UniProtKB-UniRule"/>
</dbReference>
<dbReference type="GO" id="GO:0051603">
    <property type="term" value="P:proteolysis involved in protein catabolic process"/>
    <property type="evidence" value="ECO:0007669"/>
    <property type="project" value="TreeGrafter"/>
</dbReference>
<dbReference type="CDD" id="cd19498">
    <property type="entry name" value="RecA-like_HslU"/>
    <property type="match status" value="1"/>
</dbReference>
<dbReference type="FunFam" id="1.10.8.10:FF:000012">
    <property type="entry name" value="ATP-dependent protease ATPase subunit HslU"/>
    <property type="match status" value="1"/>
</dbReference>
<dbReference type="FunFam" id="1.10.8.10:FF:000028">
    <property type="entry name" value="ATP-dependent protease ATPase subunit HslU"/>
    <property type="match status" value="1"/>
</dbReference>
<dbReference type="FunFam" id="1.10.8.60:FF:000027">
    <property type="entry name" value="ATP-dependent protease ATPase subunit HslU"/>
    <property type="match status" value="1"/>
</dbReference>
<dbReference type="FunFam" id="3.40.50.300:FF:000213">
    <property type="entry name" value="ATP-dependent protease ATPase subunit HslU"/>
    <property type="match status" value="1"/>
</dbReference>
<dbReference type="FunFam" id="3.40.50.300:FF:000220">
    <property type="entry name" value="ATP-dependent protease ATPase subunit HslU"/>
    <property type="match status" value="1"/>
</dbReference>
<dbReference type="Gene3D" id="1.10.8.60">
    <property type="match status" value="1"/>
</dbReference>
<dbReference type="Gene3D" id="1.10.8.10">
    <property type="entry name" value="DNA helicase RuvA subunit, C-terminal domain"/>
    <property type="match status" value="2"/>
</dbReference>
<dbReference type="Gene3D" id="3.40.50.300">
    <property type="entry name" value="P-loop containing nucleotide triphosphate hydrolases"/>
    <property type="match status" value="1"/>
</dbReference>
<dbReference type="HAMAP" id="MF_00249">
    <property type="entry name" value="HslU"/>
    <property type="match status" value="1"/>
</dbReference>
<dbReference type="InterPro" id="IPR003593">
    <property type="entry name" value="AAA+_ATPase"/>
</dbReference>
<dbReference type="InterPro" id="IPR050052">
    <property type="entry name" value="ATP-dep_Clp_protease_ClpX"/>
</dbReference>
<dbReference type="InterPro" id="IPR003959">
    <property type="entry name" value="ATPase_AAA_core"/>
</dbReference>
<dbReference type="InterPro" id="IPR019489">
    <property type="entry name" value="Clp_ATPase_C"/>
</dbReference>
<dbReference type="InterPro" id="IPR004491">
    <property type="entry name" value="HslU"/>
</dbReference>
<dbReference type="InterPro" id="IPR027417">
    <property type="entry name" value="P-loop_NTPase"/>
</dbReference>
<dbReference type="NCBIfam" id="TIGR00390">
    <property type="entry name" value="hslU"/>
    <property type="match status" value="1"/>
</dbReference>
<dbReference type="NCBIfam" id="NF003544">
    <property type="entry name" value="PRK05201.1"/>
    <property type="match status" value="1"/>
</dbReference>
<dbReference type="PANTHER" id="PTHR48102">
    <property type="entry name" value="ATP-DEPENDENT CLP PROTEASE ATP-BINDING SUBUNIT CLPX-LIKE, MITOCHONDRIAL-RELATED"/>
    <property type="match status" value="1"/>
</dbReference>
<dbReference type="PANTHER" id="PTHR48102:SF3">
    <property type="entry name" value="ATP-DEPENDENT PROTEASE ATPASE SUBUNIT HSLU"/>
    <property type="match status" value="1"/>
</dbReference>
<dbReference type="Pfam" id="PF00004">
    <property type="entry name" value="AAA"/>
    <property type="match status" value="1"/>
</dbReference>
<dbReference type="Pfam" id="PF07724">
    <property type="entry name" value="AAA_2"/>
    <property type="match status" value="1"/>
</dbReference>
<dbReference type="SMART" id="SM00382">
    <property type="entry name" value="AAA"/>
    <property type="match status" value="1"/>
</dbReference>
<dbReference type="SMART" id="SM01086">
    <property type="entry name" value="ClpB_D2-small"/>
    <property type="match status" value="1"/>
</dbReference>
<dbReference type="SUPFAM" id="SSF52540">
    <property type="entry name" value="P-loop containing nucleoside triphosphate hydrolases"/>
    <property type="match status" value="1"/>
</dbReference>
<feature type="chain" id="PRO_1000125439" description="ATP-dependent protease ATPase subunit HslU">
    <location>
        <begin position="1"/>
        <end position="443"/>
    </location>
</feature>
<feature type="binding site" evidence="1">
    <location>
        <position position="18"/>
    </location>
    <ligand>
        <name>ATP</name>
        <dbReference type="ChEBI" id="CHEBI:30616"/>
    </ligand>
</feature>
<feature type="binding site" evidence="1">
    <location>
        <begin position="60"/>
        <end position="65"/>
    </location>
    <ligand>
        <name>ATP</name>
        <dbReference type="ChEBI" id="CHEBI:30616"/>
    </ligand>
</feature>
<feature type="binding site" evidence="1">
    <location>
        <position position="256"/>
    </location>
    <ligand>
        <name>ATP</name>
        <dbReference type="ChEBI" id="CHEBI:30616"/>
    </ligand>
</feature>
<feature type="binding site" evidence="1">
    <location>
        <position position="321"/>
    </location>
    <ligand>
        <name>ATP</name>
        <dbReference type="ChEBI" id="CHEBI:30616"/>
    </ligand>
</feature>
<feature type="binding site" evidence="1">
    <location>
        <position position="393"/>
    </location>
    <ligand>
        <name>ATP</name>
        <dbReference type="ChEBI" id="CHEBI:30616"/>
    </ligand>
</feature>
<gene>
    <name evidence="1" type="primary">hslU</name>
    <name type="ordered locus">ECED1_4633</name>
</gene>
<sequence length="443" mass="49581">MSEMTPREIVSELDKHIIGQDNAKRSVAIALRNRWRRMQLNEELRHEVTPKNILMIGPTGVGKTEIARRLAKLANAPFIKVEATKFTEVGYVGKEVDSIIRDLTDAAVKMVRVQAIEKNRYRAEELAEERILDVLIPPAKNNWGQTEQQQEPSAARQAFRKKLREGQLDDKEIEIDLAAAPMGVEIMAPPGMEEMTSQLQSMFQNLGGQKQKARKLKIKDAMKLLIEEEAAKLVNPEELKQDAIDAVEQHGIVFIDEIDKICKRGESSGPDVSREGVQRDLLPLVEGCTVSTKHGMVKTDHILFIASGAFQIAKPSDLIPELQGRLPIRVELQALTTSDFERILTEPNASITVQYKALMATEGVNIEFTDSGIKRIAEAAWQVNESTENIGARRLHTVLERLMEEISYDASDLSGQTITIDADYVSKHLDALVADEDLSRFIL</sequence>
<protein>
    <recommendedName>
        <fullName evidence="1">ATP-dependent protease ATPase subunit HslU</fullName>
    </recommendedName>
    <alternativeName>
        <fullName evidence="1">Heat shock protein HslU</fullName>
    </alternativeName>
    <alternativeName>
        <fullName evidence="1">Unfoldase HslU</fullName>
    </alternativeName>
</protein>
<accession>B7N2S2</accession>
<proteinExistence type="inferred from homology"/>
<evidence type="ECO:0000255" key="1">
    <source>
        <dbReference type="HAMAP-Rule" id="MF_00249"/>
    </source>
</evidence>